<comment type="function">
    <text evidence="2">Specifically catalyzes the decarboxylation of meso-diaminopimelate (meso-DAP) to L-lysine.</text>
</comment>
<comment type="catalytic activity">
    <reaction evidence="2">
        <text>meso-2,6-diaminopimelate + H(+) = L-lysine + CO2</text>
        <dbReference type="Rhea" id="RHEA:15101"/>
        <dbReference type="ChEBI" id="CHEBI:15378"/>
        <dbReference type="ChEBI" id="CHEBI:16526"/>
        <dbReference type="ChEBI" id="CHEBI:32551"/>
        <dbReference type="ChEBI" id="CHEBI:57791"/>
        <dbReference type="EC" id="4.1.1.20"/>
    </reaction>
</comment>
<comment type="cofactor">
    <cofactor evidence="2">
        <name>pyridoxal 5'-phosphate</name>
        <dbReference type="ChEBI" id="CHEBI:597326"/>
    </cofactor>
</comment>
<comment type="pathway">
    <text evidence="2">Amino-acid biosynthesis; L-lysine biosynthesis via DAP pathway; L-lysine from DL-2,6-diaminopimelate: step 1/1.</text>
</comment>
<comment type="subunit">
    <text evidence="2">Homodimer.</text>
</comment>
<comment type="similarity">
    <text evidence="2">Belongs to the Orn/Lys/Arg decarboxylase class-II family. LysA subfamily.</text>
</comment>
<sequence>MYFHGTTKVNEKGHLEIGGVDTIELAQKYGTPLYVYDVALIRERARGFKNTFDELGIKAQVAYASKAFSTVAMIQLAEEEGLSLDVVSGGELYTALVAGFPVHKIHFHGNNKSRAELEMALEHQIGCIVVDNFHELDLIDSICSEKNVKTNILLRVTPGIEAHTHDYILTGQEDSKFGFDLQNGQAEKALQIALNSNFVEVLGVHCHIGSQIFDTTGFVLAARKIFEKLKEWKDRLSYEPKVLNLGGGFGIRYTEEDDPIPASQYVKEIINEVKKQVSAYSMKMPEIWIEPGRSLVGDAGTTLYQIGSRKDVPNVRHYVAVDGGMSDNIRPALYNAKYEAVLANKPLAKADETVSIAGKCCESGDMLIWDLPLPKADSDDILAVFCTGAYGYSMANNYNRIPRPAVVFVENGESMLVVKRKHMRTSSAMICL</sequence>
<proteinExistence type="inferred from homology"/>
<keyword id="KW-0028">Amino-acid biosynthesis</keyword>
<keyword id="KW-0210">Decarboxylase</keyword>
<keyword id="KW-0456">Lyase</keyword>
<keyword id="KW-0457">Lysine biosynthesis</keyword>
<keyword id="KW-0663">Pyridoxal phosphate</keyword>
<gene>
    <name evidence="2" type="primary">lysA</name>
</gene>
<name>DCDA_BACMT</name>
<feature type="chain" id="PRO_0000149914" description="Diaminopimelate decarboxylase">
    <location>
        <begin position="1"/>
        <end position="432"/>
    </location>
</feature>
<feature type="active site" description="Proton donor" evidence="1">
    <location>
        <position position="361"/>
    </location>
</feature>
<feature type="binding site" evidence="2">
    <location>
        <position position="248"/>
    </location>
    <ligand>
        <name>pyridoxal 5'-phosphate</name>
        <dbReference type="ChEBI" id="CHEBI:597326"/>
    </ligand>
</feature>
<feature type="binding site" evidence="2">
    <location>
        <begin position="290"/>
        <end position="293"/>
    </location>
    <ligand>
        <name>pyridoxal 5'-phosphate</name>
        <dbReference type="ChEBI" id="CHEBI:597326"/>
    </ligand>
</feature>
<feature type="binding site" evidence="2">
    <location>
        <position position="293"/>
    </location>
    <ligand>
        <name>substrate</name>
    </ligand>
</feature>
<feature type="binding site" evidence="2">
    <location>
        <position position="330"/>
    </location>
    <ligand>
        <name>substrate</name>
    </ligand>
</feature>
<feature type="binding site" evidence="2">
    <location>
        <position position="334"/>
    </location>
    <ligand>
        <name>substrate</name>
    </ligand>
</feature>
<feature type="binding site" evidence="2">
    <location>
        <position position="362"/>
    </location>
    <ligand>
        <name>substrate</name>
    </ligand>
</feature>
<feature type="binding site" evidence="2">
    <location>
        <position position="390"/>
    </location>
    <ligand>
        <name>pyridoxal 5'-phosphate</name>
        <dbReference type="ChEBI" id="CHEBI:597326"/>
    </ligand>
</feature>
<feature type="binding site" evidence="2">
    <location>
        <position position="390"/>
    </location>
    <ligand>
        <name>substrate</name>
    </ligand>
</feature>
<feature type="modified residue" description="N6-(pyridoxal phosphate)lysine" evidence="2">
    <location>
        <position position="66"/>
    </location>
</feature>
<dbReference type="EC" id="4.1.1.20" evidence="2"/>
<dbReference type="EMBL" id="L18879">
    <property type="protein sequence ID" value="AAC36985.1"/>
    <property type="molecule type" value="Unassigned_DNA"/>
</dbReference>
<dbReference type="PIR" id="I39877">
    <property type="entry name" value="I39877"/>
</dbReference>
<dbReference type="SMR" id="P41023"/>
<dbReference type="UniPathway" id="UPA00034">
    <property type="reaction ID" value="UER00027"/>
</dbReference>
<dbReference type="GO" id="GO:0008836">
    <property type="term" value="F:diaminopimelate decarboxylase activity"/>
    <property type="evidence" value="ECO:0007669"/>
    <property type="project" value="UniProtKB-UniRule"/>
</dbReference>
<dbReference type="GO" id="GO:0030170">
    <property type="term" value="F:pyridoxal phosphate binding"/>
    <property type="evidence" value="ECO:0007669"/>
    <property type="project" value="UniProtKB-UniRule"/>
</dbReference>
<dbReference type="GO" id="GO:0009089">
    <property type="term" value="P:lysine biosynthetic process via diaminopimelate"/>
    <property type="evidence" value="ECO:0007669"/>
    <property type="project" value="UniProtKB-UniRule"/>
</dbReference>
<dbReference type="CDD" id="cd06828">
    <property type="entry name" value="PLPDE_III_DapDC"/>
    <property type="match status" value="1"/>
</dbReference>
<dbReference type="FunFam" id="3.20.20.10:FF:000003">
    <property type="entry name" value="Diaminopimelate decarboxylase"/>
    <property type="match status" value="1"/>
</dbReference>
<dbReference type="Gene3D" id="3.20.20.10">
    <property type="entry name" value="Alanine racemase"/>
    <property type="match status" value="1"/>
</dbReference>
<dbReference type="Gene3D" id="2.40.37.10">
    <property type="entry name" value="Lyase, Ornithine Decarboxylase, Chain A, domain 1"/>
    <property type="match status" value="1"/>
</dbReference>
<dbReference type="HAMAP" id="MF_02120">
    <property type="entry name" value="LysA"/>
    <property type="match status" value="1"/>
</dbReference>
<dbReference type="InterPro" id="IPR009006">
    <property type="entry name" value="Ala_racemase/Decarboxylase_C"/>
</dbReference>
<dbReference type="InterPro" id="IPR002986">
    <property type="entry name" value="DAP_deCOOHase_LysA"/>
</dbReference>
<dbReference type="InterPro" id="IPR022643">
    <property type="entry name" value="De-COase2_C"/>
</dbReference>
<dbReference type="InterPro" id="IPR022657">
    <property type="entry name" value="De-COase2_CS"/>
</dbReference>
<dbReference type="InterPro" id="IPR022644">
    <property type="entry name" value="De-COase2_N"/>
</dbReference>
<dbReference type="InterPro" id="IPR022653">
    <property type="entry name" value="De-COase2_pyr-phos_BS"/>
</dbReference>
<dbReference type="InterPro" id="IPR000183">
    <property type="entry name" value="Orn/DAP/Arg_de-COase"/>
</dbReference>
<dbReference type="InterPro" id="IPR029066">
    <property type="entry name" value="PLP-binding_barrel"/>
</dbReference>
<dbReference type="NCBIfam" id="TIGR01048">
    <property type="entry name" value="lysA"/>
    <property type="match status" value="1"/>
</dbReference>
<dbReference type="PANTHER" id="PTHR43727">
    <property type="entry name" value="DIAMINOPIMELATE DECARBOXYLASE"/>
    <property type="match status" value="1"/>
</dbReference>
<dbReference type="PANTHER" id="PTHR43727:SF2">
    <property type="entry name" value="GROUP IV DECARBOXYLASE"/>
    <property type="match status" value="1"/>
</dbReference>
<dbReference type="Pfam" id="PF02784">
    <property type="entry name" value="Orn_Arg_deC_N"/>
    <property type="match status" value="1"/>
</dbReference>
<dbReference type="Pfam" id="PF00278">
    <property type="entry name" value="Orn_DAP_Arg_deC"/>
    <property type="match status" value="1"/>
</dbReference>
<dbReference type="PRINTS" id="PR01181">
    <property type="entry name" value="DAPDCRBXLASE"/>
</dbReference>
<dbReference type="PRINTS" id="PR01179">
    <property type="entry name" value="ODADCRBXLASE"/>
</dbReference>
<dbReference type="SUPFAM" id="SSF50621">
    <property type="entry name" value="Alanine racemase C-terminal domain-like"/>
    <property type="match status" value="1"/>
</dbReference>
<dbReference type="SUPFAM" id="SSF51419">
    <property type="entry name" value="PLP-binding barrel"/>
    <property type="match status" value="1"/>
</dbReference>
<dbReference type="PROSITE" id="PS00878">
    <property type="entry name" value="ODR_DC_2_1"/>
    <property type="match status" value="1"/>
</dbReference>
<dbReference type="PROSITE" id="PS00879">
    <property type="entry name" value="ODR_DC_2_2"/>
    <property type="match status" value="1"/>
</dbReference>
<accession>P41023</accession>
<reference key="1">
    <citation type="journal article" date="1993" name="Appl. Environ. Microbiol.">
        <title>Cloning and sequence analysis of the meso-diaminopimelate decarboxylase gene from Bacillus methanolicus MGA3 and comparison to other decarboxylase genes.</title>
        <authorList>
            <person name="Mills D.A."/>
            <person name="Flickinger M.C."/>
        </authorList>
    </citation>
    <scope>NUCLEOTIDE SEQUENCE [GENOMIC DNA]</scope>
    <source>
        <strain>MGA3</strain>
    </source>
</reference>
<protein>
    <recommendedName>
        <fullName evidence="2">Diaminopimelate decarboxylase</fullName>
        <shortName evidence="2">DAP decarboxylase</shortName>
        <shortName evidence="2">DAPDC</shortName>
        <ecNumber evidence="2">4.1.1.20</ecNumber>
    </recommendedName>
</protein>
<evidence type="ECO:0000255" key="1"/>
<evidence type="ECO:0000255" key="2">
    <source>
        <dbReference type="HAMAP-Rule" id="MF_02120"/>
    </source>
</evidence>
<organism>
    <name type="scientific">Bacillus methanolicus</name>
    <dbReference type="NCBI Taxonomy" id="1471"/>
    <lineage>
        <taxon>Bacteria</taxon>
        <taxon>Bacillati</taxon>
        <taxon>Bacillota</taxon>
        <taxon>Bacilli</taxon>
        <taxon>Bacillales</taxon>
        <taxon>Bacillaceae</taxon>
        <taxon>Bacillus</taxon>
    </lineage>
</organism>